<protein>
    <recommendedName>
        <fullName evidence="1">Small ribosomal subunit protein bS6</fullName>
    </recommendedName>
    <alternativeName>
        <fullName evidence="2">30S ribosomal protein S6</fullName>
    </alternativeName>
</protein>
<gene>
    <name evidence="1" type="primary">rpsF</name>
    <name type="ordered locus">SE_2372</name>
</gene>
<keyword id="KW-0687">Ribonucleoprotein</keyword>
<keyword id="KW-0689">Ribosomal protein</keyword>
<keyword id="KW-0694">RNA-binding</keyword>
<keyword id="KW-0699">rRNA-binding</keyword>
<sequence length="98" mass="11735">MRTYEIMYIVRPNIEEDAKKALVERFNGILASEGSEVLEEKDWGKRRLAYEINDFKEGFYNIVRIKTDNNKSTDEFQRLAKINDDIIRYIVIREDQDK</sequence>
<dbReference type="EMBL" id="AE015929">
    <property type="protein sequence ID" value="AAO06015.1"/>
    <property type="molecule type" value="Genomic_DNA"/>
</dbReference>
<dbReference type="RefSeq" id="NP_765927.1">
    <property type="nucleotide sequence ID" value="NC_004461.1"/>
</dbReference>
<dbReference type="RefSeq" id="WP_001831345.1">
    <property type="nucleotide sequence ID" value="NZ_WBME01000004.1"/>
</dbReference>
<dbReference type="SMR" id="Q8CQP4"/>
<dbReference type="GeneID" id="50019678"/>
<dbReference type="KEGG" id="sep:SE_2372"/>
<dbReference type="PATRIC" id="fig|176280.10.peg.2311"/>
<dbReference type="eggNOG" id="COG0360">
    <property type="taxonomic scope" value="Bacteria"/>
</dbReference>
<dbReference type="HOGENOM" id="CLU_113441_5_3_9"/>
<dbReference type="OrthoDB" id="9812702at2"/>
<dbReference type="Proteomes" id="UP000001411">
    <property type="component" value="Chromosome"/>
</dbReference>
<dbReference type="GO" id="GO:0005737">
    <property type="term" value="C:cytoplasm"/>
    <property type="evidence" value="ECO:0007669"/>
    <property type="project" value="UniProtKB-ARBA"/>
</dbReference>
<dbReference type="GO" id="GO:1990904">
    <property type="term" value="C:ribonucleoprotein complex"/>
    <property type="evidence" value="ECO:0007669"/>
    <property type="project" value="UniProtKB-KW"/>
</dbReference>
<dbReference type="GO" id="GO:0005840">
    <property type="term" value="C:ribosome"/>
    <property type="evidence" value="ECO:0007669"/>
    <property type="project" value="UniProtKB-KW"/>
</dbReference>
<dbReference type="GO" id="GO:0070181">
    <property type="term" value="F:small ribosomal subunit rRNA binding"/>
    <property type="evidence" value="ECO:0007669"/>
    <property type="project" value="TreeGrafter"/>
</dbReference>
<dbReference type="GO" id="GO:0003735">
    <property type="term" value="F:structural constituent of ribosome"/>
    <property type="evidence" value="ECO:0007669"/>
    <property type="project" value="InterPro"/>
</dbReference>
<dbReference type="GO" id="GO:0006412">
    <property type="term" value="P:translation"/>
    <property type="evidence" value="ECO:0007669"/>
    <property type="project" value="UniProtKB-UniRule"/>
</dbReference>
<dbReference type="CDD" id="cd00473">
    <property type="entry name" value="bS6"/>
    <property type="match status" value="1"/>
</dbReference>
<dbReference type="FunFam" id="3.30.70.60:FF:000002">
    <property type="entry name" value="30S ribosomal protein S6"/>
    <property type="match status" value="1"/>
</dbReference>
<dbReference type="Gene3D" id="3.30.70.60">
    <property type="match status" value="1"/>
</dbReference>
<dbReference type="HAMAP" id="MF_00360">
    <property type="entry name" value="Ribosomal_bS6"/>
    <property type="match status" value="1"/>
</dbReference>
<dbReference type="InterPro" id="IPR000529">
    <property type="entry name" value="Ribosomal_bS6"/>
</dbReference>
<dbReference type="InterPro" id="IPR020815">
    <property type="entry name" value="Ribosomal_bS6_CS"/>
</dbReference>
<dbReference type="InterPro" id="IPR035980">
    <property type="entry name" value="Ribosomal_bS6_sf"/>
</dbReference>
<dbReference type="InterPro" id="IPR020814">
    <property type="entry name" value="Ribosomal_S6_plastid/chlpt"/>
</dbReference>
<dbReference type="InterPro" id="IPR014717">
    <property type="entry name" value="Transl_elong_EF1B/ribsomal_bS6"/>
</dbReference>
<dbReference type="NCBIfam" id="TIGR00166">
    <property type="entry name" value="S6"/>
    <property type="match status" value="1"/>
</dbReference>
<dbReference type="PANTHER" id="PTHR21011">
    <property type="entry name" value="MITOCHONDRIAL 28S RIBOSOMAL PROTEIN S6"/>
    <property type="match status" value="1"/>
</dbReference>
<dbReference type="PANTHER" id="PTHR21011:SF1">
    <property type="entry name" value="SMALL RIBOSOMAL SUBUNIT PROTEIN BS6M"/>
    <property type="match status" value="1"/>
</dbReference>
<dbReference type="Pfam" id="PF01250">
    <property type="entry name" value="Ribosomal_S6"/>
    <property type="match status" value="1"/>
</dbReference>
<dbReference type="SUPFAM" id="SSF54995">
    <property type="entry name" value="Ribosomal protein S6"/>
    <property type="match status" value="1"/>
</dbReference>
<dbReference type="PROSITE" id="PS01048">
    <property type="entry name" value="RIBOSOMAL_S6"/>
    <property type="match status" value="1"/>
</dbReference>
<reference key="1">
    <citation type="journal article" date="2003" name="Mol. Microbiol.">
        <title>Genome-based analysis of virulence genes in a non-biofilm-forming Staphylococcus epidermidis strain (ATCC 12228).</title>
        <authorList>
            <person name="Zhang Y.-Q."/>
            <person name="Ren S.-X."/>
            <person name="Li H.-L."/>
            <person name="Wang Y.-X."/>
            <person name="Fu G."/>
            <person name="Yang J."/>
            <person name="Qin Z.-Q."/>
            <person name="Miao Y.-G."/>
            <person name="Wang W.-Y."/>
            <person name="Chen R.-S."/>
            <person name="Shen Y."/>
            <person name="Chen Z."/>
            <person name="Yuan Z.-H."/>
            <person name="Zhao G.-P."/>
            <person name="Qu D."/>
            <person name="Danchin A."/>
            <person name="Wen Y.-M."/>
        </authorList>
    </citation>
    <scope>NUCLEOTIDE SEQUENCE [LARGE SCALE GENOMIC DNA]</scope>
    <source>
        <strain>ATCC 12228 / FDA PCI 1200</strain>
    </source>
</reference>
<organism>
    <name type="scientific">Staphylococcus epidermidis (strain ATCC 12228 / FDA PCI 1200)</name>
    <dbReference type="NCBI Taxonomy" id="176280"/>
    <lineage>
        <taxon>Bacteria</taxon>
        <taxon>Bacillati</taxon>
        <taxon>Bacillota</taxon>
        <taxon>Bacilli</taxon>
        <taxon>Bacillales</taxon>
        <taxon>Staphylococcaceae</taxon>
        <taxon>Staphylococcus</taxon>
    </lineage>
</organism>
<comment type="function">
    <text evidence="1">Binds together with bS18 to 16S ribosomal RNA.</text>
</comment>
<comment type="similarity">
    <text evidence="1">Belongs to the bacterial ribosomal protein bS6 family.</text>
</comment>
<accession>Q8CQP4</accession>
<name>RS6_STAES</name>
<feature type="chain" id="PRO_0000176841" description="Small ribosomal subunit protein bS6">
    <location>
        <begin position="1"/>
        <end position="98"/>
    </location>
</feature>
<proteinExistence type="inferred from homology"/>
<evidence type="ECO:0000255" key="1">
    <source>
        <dbReference type="HAMAP-Rule" id="MF_00360"/>
    </source>
</evidence>
<evidence type="ECO:0000305" key="2"/>